<comment type="function">
    <text>Core component of nucleosome. Nucleosomes wrap and compact DNA into chromatin, limiting DNA accessibility to the cellular machineries which require DNA as a template. Histones thereby play a central role in transcription regulation, DNA repair, DNA replication and chromosomal stability. DNA accessibility is regulated via a complex set of post-translational modifications of histones, also called histone code, and nucleosome remodeling.</text>
</comment>
<comment type="subunit">
    <text>The nucleosome is a histone octamer containing two molecules each of H2A, H2B, H3 and H4 assembled in one H3-H4 heterotetramer and two H2A-H2B heterodimers. The octamer wraps approximately 147 bp of DNA.</text>
</comment>
<comment type="subcellular location">
    <subcellularLocation>
        <location>Nucleus</location>
    </subcellularLocation>
    <subcellularLocation>
        <location>Chromosome</location>
    </subcellularLocation>
</comment>
<comment type="PTM">
    <text evidence="3">Acetylation is generally linked to gene activation. Acetylation on Lys-19 (H3K18ac) and Lys-24 (H3K24ac) favors methylation at Arg-18 (H3R17me). Acetylation at Lys-123 (H3K122ac) by EP300/p300 plays a central role in chromatin structure: localizes at the surface of the histone octamer and stimulates transcription, possibly by promoting nucleosome instability (By similarity).</text>
</comment>
<comment type="PTM">
    <text evidence="3">Asymmetric dimethylation at Arg-18 (H3R17me2a) is linked to gene activation. Asymmetric dimethylation at Arg-3 (H3R2me2a) by PRMT6 is linked to gene repression and is mutually exclusive with H3 Lys-5 methylation (H3K4me2 and H3K4me3). H3R2me2a is present at the 3' of genes regardless of their transcription state and is enriched on inactive promoters, while it is absent on active promoters (By similarity).</text>
</comment>
<comment type="PTM">
    <text evidence="3">Methylation at Lys-5 (H3K4me) and Lys-80 (H3K79me) are linked to gene activation. Methylation at Lys-5 (H3K4me) facilitates subsequent acetylation of H3 and H4. Methylation at Lys-80 (H3K79me) is associated with DNA double-strand break (DSB) responses and is a specific target for TP53BP1. Methylation at Lys-10 (H3K9me) and Lys-28 (H3K27me) are linked to gene repression. Methylation at Lys-10 (H3K9me) is a specific target for HP1 proteins (CBX1, CBX3 and CBX5) and prevents subsequent phosphorylation at Ser-11 (H3S10ph) and acetylation of H3 and H4. Methylation at Lys-5 (H3K4me) and Lys-80 (H3K79me) require preliminary monoubiquitination of H2B at 'Lys-120' (By similarity).</text>
</comment>
<comment type="PTM">
    <text evidence="3">Phosphorylated at Thr-4 (H3T3ph) by HASPIN during prophase and dephosphorylated during anaphase. Phosphorylation at Ser-11 (H3S10ph) by AURKB is crucial for chromosome condensation and cell-cycle progression during mitosis and meiosis. In addition phosphorylation at Ser-11 (H3S10ph) by RPS6KA4 and RPS6KA5 is important during interphase because it enables the transcription of genes following external stimulation, like mitogens, stress, growth factors or UV irradiation and result in the activation of genes, such as c-fos and c-jun. Phosphorylation at Ser-11 (H3S10ph), which is linked to gene activation, prevents methylation at Lys-10 (H3K9me) but facilitates acetylation of H3 and H4. Phosphorylation at Ser-11 (H3S10ph) by AURKB mediates the dissociation of HP1 proteins (CBX1, CBX3 and CBX5) from heterochromatin. Phosphorylation at Ser-11 (H3S10ph) is also an essential regulatory mechanism for neoplastic cell transformation. Phosphorylated at Ser-29 (H3S28ph) by MAP3K20 isoform 1, RPS6KA5 or AURKB during mitosis or upon ultraviolet B irradiation. Phosphorylation at Thr-7 (H3T6ph) by PRKCB is a specific tag for epigenetic transcriptional activation that prevents demethylation of Lys-5 (H3K4me) by LSD1/KDM1A. At centromeres, specifically phosphorylated at Thr-12 (H3T11ph) from prophase to early anaphase, by DAPK3 and PKN1. Phosphorylation at Thr-12 (H3T11ph) by PKN1 or isoform M2 of PKM (PKM2) is a specific tag for epigenetic transcriptional activation that promotes demethylation of Lys-10 (H3K9me) by KDM4C/JMJD2C. Phosphorylation at Tyr-42 (H3Y41ph) by JAK2 promotes exclusion of CBX5 (HP1 alpha) from chromatin (By similarity).</text>
</comment>
<comment type="PTM">
    <text evidence="3">Lysine deamination at Lys-5 (H3K4all) to form allysine only takes place on H3K4me3 and results in gene repression.</text>
</comment>
<comment type="PTM">
    <text evidence="2">Butyrylation of histones marks active promoters and competes with histone acetylation. It is present during late spermatogenesis.</text>
</comment>
<comment type="PTM">
    <text evidence="1">Succinylation at Lys-80 (H3K79succ) by KAT2A takes place with a maximum frequency around the transcription start sites of genes. It gives a specific tag for epigenetic transcription activation. Desuccinylation at Lys-123 (H3K122succ) by SIRT7 in response to DNA damage promotes chromatin condensation and double-strand breaks (DSBs) repair.</text>
</comment>
<comment type="PTM">
    <text evidence="1">Serine ADP-ribosylation constitutes the primary form of ADP-ribosylation of proteins in response to DNA damage. Serine ADP-ribosylation at Ser-11 (H3S10ADPr) is mutually exclusive with phosphorylation at Ser-11 (H3S10ph) and impairs acetylation at Lys-10 (H3K9ac).</text>
</comment>
<comment type="similarity">
    <text evidence="7">Belongs to the histone H3 family.</text>
</comment>
<proteinExistence type="inferred from homology"/>
<reference key="1">
    <citation type="journal article" date="1985" name="Gene">
        <title>Structure of a duck H3 variant histone gene: a H3 subtype with four cysteine residues.</title>
        <authorList>
            <person name="Tonjes R."/>
            <person name="Doenecke D."/>
        </authorList>
    </citation>
    <scope>NUCLEOTIDE SEQUENCE [GENOMIC DNA]</scope>
</reference>
<evidence type="ECO:0000250" key="1">
    <source>
        <dbReference type="UniProtKB" id="P68431"/>
    </source>
</evidence>
<evidence type="ECO:0000250" key="2">
    <source>
        <dbReference type="UniProtKB" id="P68433"/>
    </source>
</evidence>
<evidence type="ECO:0000250" key="3">
    <source>
        <dbReference type="UniProtKB" id="P84243"/>
    </source>
</evidence>
<evidence type="ECO:0000250" key="4">
    <source>
        <dbReference type="UniProtKB" id="P84244"/>
    </source>
</evidence>
<evidence type="ECO:0000250" key="5">
    <source>
        <dbReference type="UniProtKB" id="Q6NXT2"/>
    </source>
</evidence>
<evidence type="ECO:0000256" key="6">
    <source>
        <dbReference type="SAM" id="MobiDB-lite"/>
    </source>
</evidence>
<evidence type="ECO:0000305" key="7"/>
<accession>P06902</accession>
<name>H3C_CAIMO</name>
<keyword id="KW-0007">Acetylation</keyword>
<keyword id="KW-0013">ADP-ribosylation</keyword>
<keyword id="KW-0158">Chromosome</keyword>
<keyword id="KW-0238">DNA-binding</keyword>
<keyword id="KW-0379">Hydroxylation</keyword>
<keyword id="KW-0488">Methylation</keyword>
<keyword id="KW-0544">Nucleosome core</keyword>
<keyword id="KW-0539">Nucleus</keyword>
<keyword id="KW-0597">Phosphoprotein</keyword>
<keyword id="KW-1185">Reference proteome</keyword>
<keyword id="KW-0832">Ubl conjugation</keyword>
<feature type="initiator methionine" description="Removed" evidence="7">
    <location>
        <position position="1"/>
    </location>
</feature>
<feature type="chain" id="PRO_0000221259" description="Histone H3.3C">
    <location>
        <begin position="2"/>
        <end position="136"/>
    </location>
</feature>
<feature type="region of interest" description="Disordered" evidence="6">
    <location>
        <begin position="1"/>
        <end position="39"/>
    </location>
</feature>
<feature type="compositionally biased region" description="Polar residues" evidence="6">
    <location>
        <begin position="1"/>
        <end position="10"/>
    </location>
</feature>
<feature type="modified residue" description="Asymmetric dimethylarginine; by PRMT6" evidence="3">
    <location>
        <position position="3"/>
    </location>
</feature>
<feature type="modified residue" description="Phosphothreonine; by HASPIN" evidence="3">
    <location>
        <position position="4"/>
    </location>
</feature>
<feature type="modified residue" description="Allysine; alternate" evidence="3">
    <location>
        <position position="5"/>
    </location>
</feature>
<feature type="modified residue" description="N6,N6,N6-trimethyllysine; alternate" evidence="3">
    <location>
        <position position="5"/>
    </location>
</feature>
<feature type="modified residue" description="N6,N6-dimethyllysine; alternate" evidence="3">
    <location>
        <position position="5"/>
    </location>
</feature>
<feature type="modified residue" description="N6-(2-hydroxyisobutyryl)lysine; alternate" evidence="1">
    <location>
        <position position="5"/>
    </location>
</feature>
<feature type="modified residue" description="N6-acetyllysine; alternate" evidence="3">
    <location>
        <position position="5"/>
    </location>
</feature>
<feature type="modified residue" description="N6-methyllysine; alternate" evidence="3">
    <location>
        <position position="5"/>
    </location>
</feature>
<feature type="modified residue" description="5-glutamyl dopamine; alternate" evidence="1">
    <location>
        <position position="6"/>
    </location>
</feature>
<feature type="modified residue" description="5-glutamyl serotonin; alternate" evidence="1">
    <location>
        <position position="6"/>
    </location>
</feature>
<feature type="modified residue" description="Phosphothreonine; by PKC" evidence="3">
    <location>
        <position position="7"/>
    </location>
</feature>
<feature type="modified residue" description="N6-(2-hydroxyisobutyryl)lysine; alternate" evidence="1">
    <location>
        <position position="10"/>
    </location>
</feature>
<feature type="modified residue" description="N6-lactoyllysine; alternate" evidence="1">
    <location>
        <position position="10"/>
    </location>
</feature>
<feature type="modified residue" description="N6-methylated lysine" evidence="3">
    <location>
        <position position="10"/>
    </location>
</feature>
<feature type="modified residue" description="ADP-ribosylserine; alternate" evidence="1">
    <location>
        <position position="11"/>
    </location>
</feature>
<feature type="modified residue" description="Phosphoserine; alternate; by AURKB, AURKC, RPS6KA3, RPS6KA4 and RPS6KA5" evidence="3">
    <location>
        <position position="11"/>
    </location>
</feature>
<feature type="modified residue" description="Phosphothreonine; by PKC" evidence="3">
    <location>
        <position position="12"/>
    </location>
</feature>
<feature type="modified residue" description="N6-(2-hydroxyisobutyryl)lysine; alternate" evidence="1">
    <location>
        <position position="15"/>
    </location>
</feature>
<feature type="modified residue" description="N6-acetyllysine" evidence="3">
    <location>
        <position position="15"/>
    </location>
</feature>
<feature type="modified residue" description="N6-glutaryllysine; alternate" evidence="3">
    <location>
        <position position="15"/>
    </location>
</feature>
<feature type="modified residue" description="N6-lactoyllysine; alternate" evidence="2">
    <location>
        <position position="15"/>
    </location>
</feature>
<feature type="modified residue" description="Asymmetric dimethylarginine" evidence="3">
    <location>
        <position position="18"/>
    </location>
</feature>
<feature type="modified residue" description="N6-(2-hydroxyisobutyryl)lysine; alternate" evidence="1">
    <location>
        <position position="19"/>
    </location>
</feature>
<feature type="modified residue" description="N6-acetyllysine; alternate" evidence="3">
    <location>
        <position position="19"/>
    </location>
</feature>
<feature type="modified residue" description="N6-butyryllysine; alternate" evidence="2">
    <location>
        <position position="19"/>
    </location>
</feature>
<feature type="modified residue" description="N6-glutaryllysine; alternate" evidence="3">
    <location>
        <position position="19"/>
    </location>
</feature>
<feature type="modified residue" description="N6-lactoyllysine; alternate" evidence="1">
    <location>
        <position position="19"/>
    </location>
</feature>
<feature type="modified residue" description="N6-methylated lysine; alternate" evidence="3">
    <location>
        <position position="19"/>
    </location>
</feature>
<feature type="modified residue" description="N6-(2-hydroxyisobutyryl)lysine; alternate" evidence="1">
    <location>
        <position position="24"/>
    </location>
</feature>
<feature type="modified residue" description="N6-acetyllysine" evidence="3">
    <location>
        <position position="24"/>
    </location>
</feature>
<feature type="modified residue" description="N6-butyryllysine; alternate" evidence="2">
    <location>
        <position position="24"/>
    </location>
</feature>
<feature type="modified residue" description="N6-glutaryllysine; alternate" evidence="3">
    <location>
        <position position="24"/>
    </location>
</feature>
<feature type="modified residue" description="N6-lactoyllysine; alternate" evidence="1">
    <location>
        <position position="24"/>
    </location>
</feature>
<feature type="modified residue" description="N6-(2-hydroxyisobutyryl)lysine; alternate" evidence="1">
    <location>
        <position position="28"/>
    </location>
</feature>
<feature type="modified residue" description="N6-acetyllysine; alternate" evidence="3">
    <location>
        <position position="28"/>
    </location>
</feature>
<feature type="modified residue" description="N6-glutaryllysine; alternate" evidence="3">
    <location>
        <position position="28"/>
    </location>
</feature>
<feature type="modified residue" description="N6-lactoyllysine; alternate" evidence="1">
    <location>
        <position position="28"/>
    </location>
</feature>
<feature type="modified residue" description="N6-methylated lysine; alternate" evidence="3">
    <location>
        <position position="28"/>
    </location>
</feature>
<feature type="modified residue" description="ADP-ribosylserine; alternate" evidence="1">
    <location>
        <position position="29"/>
    </location>
</feature>
<feature type="modified residue" description="Phosphoserine; alternate; by AURKB, AURKC and RPS6KA5" evidence="3">
    <location>
        <position position="29"/>
    </location>
</feature>
<feature type="modified residue" description="N6-(2-hydroxyisobutyryl)lysine; alternate" evidence="1">
    <location>
        <position position="37"/>
    </location>
</feature>
<feature type="modified residue" description="N6-acetyllysine; alternate" evidence="3">
    <location>
        <position position="37"/>
    </location>
</feature>
<feature type="modified residue" description="N6-methylated lysine; alternate" evidence="3">
    <location>
        <position position="37"/>
    </location>
</feature>
<feature type="modified residue" description="Phosphotyrosine" evidence="3">
    <location>
        <position position="42"/>
    </location>
</feature>
<feature type="modified residue" description="N6-(2-hydroxyisobutyryl)lysine; alternate" evidence="1">
    <location>
        <position position="57"/>
    </location>
</feature>
<feature type="modified residue" description="N6-glutaryllysine; alternate" evidence="3">
    <location>
        <position position="57"/>
    </location>
</feature>
<feature type="modified residue" description="N6-lactoyllysine; alternate" evidence="2">
    <location>
        <position position="57"/>
    </location>
</feature>
<feature type="modified residue" description="N6-succinyllysine; alternate" evidence="4">
    <location>
        <position position="57"/>
    </location>
</feature>
<feature type="modified residue" description="Phosphoserine" evidence="3">
    <location>
        <position position="58"/>
    </location>
</feature>
<feature type="modified residue" description="N6-(2-hydroxyisobutyryl)lysine; alternate" evidence="1">
    <location>
        <position position="65"/>
    </location>
</feature>
<feature type="modified residue" description="N6-methylated lysine" evidence="3">
    <location>
        <position position="65"/>
    </location>
</feature>
<feature type="modified residue" description="N6-(2-hydroxyisobutyryl)lysine; alternate" evidence="1">
    <location>
        <position position="80"/>
    </location>
</feature>
<feature type="modified residue" description="N6-glutaryllysine; alternate" evidence="3">
    <location>
        <position position="80"/>
    </location>
</feature>
<feature type="modified residue" description="N6-lactoyllysine; alternate" evidence="1">
    <location>
        <position position="80"/>
    </location>
</feature>
<feature type="modified residue" description="N6-methylated lysine" evidence="3">
    <location>
        <position position="80"/>
    </location>
</feature>
<feature type="modified residue" description="N6-succinyllysine; alternate" evidence="4">
    <location>
        <position position="80"/>
    </location>
</feature>
<feature type="modified residue" description="Phosphothreonine" evidence="3">
    <location>
        <position position="81"/>
    </location>
</feature>
<feature type="modified residue" description="N6-acetyllysine; alternate" evidence="3">
    <location>
        <position position="116"/>
    </location>
</feature>
<feature type="modified residue" description="N6-glutaryllysine; alternate" evidence="3">
    <location>
        <position position="116"/>
    </location>
</feature>
<feature type="modified residue" description="N6-(2-hydroxyisobutyryl)lysine; alternate" evidence="1">
    <location>
        <position position="123"/>
    </location>
</feature>
<feature type="modified residue" description="N6-acetyllysine; alternate" evidence="3">
    <location>
        <position position="123"/>
    </location>
</feature>
<feature type="modified residue" description="N6-glutaryllysine; alternate" evidence="3">
    <location>
        <position position="123"/>
    </location>
</feature>
<feature type="modified residue" description="N6-methylated lysine; alternate" evidence="3">
    <location>
        <position position="123"/>
    </location>
</feature>
<feature type="modified residue" description="N6-succinyllysine; alternate" evidence="3">
    <location>
        <position position="123"/>
    </location>
</feature>
<dbReference type="EMBL" id="M14396">
    <property type="protein sequence ID" value="AAA49151.1"/>
    <property type="molecule type" value="Genomic_DNA"/>
</dbReference>
<dbReference type="PIR" id="A23981">
    <property type="entry name" value="HSDK34"/>
</dbReference>
<dbReference type="SMR" id="P06902"/>
<dbReference type="Proteomes" id="UP000694556">
    <property type="component" value="Unplaced"/>
</dbReference>
<dbReference type="GO" id="GO:0000786">
    <property type="term" value="C:nucleosome"/>
    <property type="evidence" value="ECO:0007669"/>
    <property type="project" value="UniProtKB-KW"/>
</dbReference>
<dbReference type="GO" id="GO:0005634">
    <property type="term" value="C:nucleus"/>
    <property type="evidence" value="ECO:0007669"/>
    <property type="project" value="UniProtKB-SubCell"/>
</dbReference>
<dbReference type="GO" id="GO:0003677">
    <property type="term" value="F:DNA binding"/>
    <property type="evidence" value="ECO:0007669"/>
    <property type="project" value="UniProtKB-KW"/>
</dbReference>
<dbReference type="GO" id="GO:0046982">
    <property type="term" value="F:protein heterodimerization activity"/>
    <property type="evidence" value="ECO:0007669"/>
    <property type="project" value="InterPro"/>
</dbReference>
<dbReference type="GO" id="GO:0030527">
    <property type="term" value="F:structural constituent of chromatin"/>
    <property type="evidence" value="ECO:0007669"/>
    <property type="project" value="InterPro"/>
</dbReference>
<dbReference type="CDD" id="cd22911">
    <property type="entry name" value="HFD_H3"/>
    <property type="match status" value="1"/>
</dbReference>
<dbReference type="FunFam" id="1.10.20.10:FF:000078">
    <property type="entry name" value="Histone H3"/>
    <property type="match status" value="1"/>
</dbReference>
<dbReference type="FunFam" id="1.10.20.10:FF:000044">
    <property type="entry name" value="Histone H3.3"/>
    <property type="match status" value="1"/>
</dbReference>
<dbReference type="Gene3D" id="1.10.20.10">
    <property type="entry name" value="Histone, subunit A"/>
    <property type="match status" value="1"/>
</dbReference>
<dbReference type="InterPro" id="IPR009072">
    <property type="entry name" value="Histone-fold"/>
</dbReference>
<dbReference type="InterPro" id="IPR007125">
    <property type="entry name" value="Histone_H2A/H2B/H3"/>
</dbReference>
<dbReference type="InterPro" id="IPR000164">
    <property type="entry name" value="Histone_H3/CENP-A"/>
</dbReference>
<dbReference type="PANTHER" id="PTHR11426">
    <property type="entry name" value="HISTONE H3"/>
    <property type="match status" value="1"/>
</dbReference>
<dbReference type="Pfam" id="PF00125">
    <property type="entry name" value="Histone"/>
    <property type="match status" value="1"/>
</dbReference>
<dbReference type="PRINTS" id="PR00622">
    <property type="entry name" value="HISTONEH3"/>
</dbReference>
<dbReference type="SMART" id="SM00428">
    <property type="entry name" value="H3"/>
    <property type="match status" value="1"/>
</dbReference>
<dbReference type="SUPFAM" id="SSF47113">
    <property type="entry name" value="Histone-fold"/>
    <property type="match status" value="1"/>
</dbReference>
<dbReference type="PROSITE" id="PS00322">
    <property type="entry name" value="HISTONE_H3_1"/>
    <property type="match status" value="1"/>
</dbReference>
<dbReference type="PROSITE" id="PS00959">
    <property type="entry name" value="HISTONE_H3_2"/>
    <property type="match status" value="1"/>
</dbReference>
<sequence>MARTKQTACKSTGRKAPRKQLATKAAHKSAPAMGGVKKPHCYRPGTVALHEIHRYQKSTELLICKLPFQRLVREIAQDFKTDLRFQSSAVMALQEASEAYLVGLFEDTNLCAIHAKRVSIMPKDIQLTRRIRGERA</sequence>
<protein>
    <recommendedName>
        <fullName>Histone H3.3C</fullName>
    </recommendedName>
</protein>
<organism>
    <name type="scientific">Cairina moschata</name>
    <name type="common">Muscovy duck</name>
    <dbReference type="NCBI Taxonomy" id="8855"/>
    <lineage>
        <taxon>Eukaryota</taxon>
        <taxon>Metazoa</taxon>
        <taxon>Chordata</taxon>
        <taxon>Craniata</taxon>
        <taxon>Vertebrata</taxon>
        <taxon>Euteleostomi</taxon>
        <taxon>Archelosauria</taxon>
        <taxon>Archosauria</taxon>
        <taxon>Dinosauria</taxon>
        <taxon>Saurischia</taxon>
        <taxon>Theropoda</taxon>
        <taxon>Coelurosauria</taxon>
        <taxon>Aves</taxon>
        <taxon>Neognathae</taxon>
        <taxon>Galloanserae</taxon>
        <taxon>Anseriformes</taxon>
        <taxon>Anatidae</taxon>
        <taxon>Anatinae</taxon>
        <taxon>Cairina</taxon>
    </lineage>
</organism>
<gene>
    <name evidence="5" type="primary">H3-5</name>
</gene>